<evidence type="ECO:0000255" key="1">
    <source>
        <dbReference type="HAMAP-Rule" id="MF_01458"/>
    </source>
</evidence>
<evidence type="ECO:0000256" key="2">
    <source>
        <dbReference type="SAM" id="MobiDB-lite"/>
    </source>
</evidence>
<proteinExistence type="inferred from homology"/>
<keyword id="KW-0067">ATP-binding</keyword>
<keyword id="KW-0997">Cell inner membrane</keyword>
<keyword id="KW-1003">Cell membrane</keyword>
<keyword id="KW-0378">Hydrolase</keyword>
<keyword id="KW-0472">Membrane</keyword>
<keyword id="KW-0479">Metal-binding</keyword>
<keyword id="KW-0482">Metalloprotease</keyword>
<keyword id="KW-0547">Nucleotide-binding</keyword>
<keyword id="KW-0645">Protease</keyword>
<keyword id="KW-1185">Reference proteome</keyword>
<keyword id="KW-0812">Transmembrane</keyword>
<keyword id="KW-1133">Transmembrane helix</keyword>
<keyword id="KW-0862">Zinc</keyword>
<reference key="1">
    <citation type="journal article" date="2009" name="Appl. Environ. Microbiol.">
        <title>Complete genome sequence of the chemolithoautotrophic marine magnetotactic coccus strain MC-1.</title>
        <authorList>
            <person name="Schubbe S."/>
            <person name="Williams T.J."/>
            <person name="Xie G."/>
            <person name="Kiss H.E."/>
            <person name="Brettin T.S."/>
            <person name="Martinez D."/>
            <person name="Ross C.A."/>
            <person name="Schuler D."/>
            <person name="Cox B.L."/>
            <person name="Nealson K.H."/>
            <person name="Bazylinski D.A."/>
        </authorList>
    </citation>
    <scope>NUCLEOTIDE SEQUENCE [LARGE SCALE GENOMIC DNA]</scope>
    <source>
        <strain>ATCC BAA-1437 / JCM 17883 / MC-1</strain>
    </source>
</reference>
<gene>
    <name evidence="1" type="primary">ftsH</name>
    <name type="ordered locus">Mmc1_0438</name>
</gene>
<comment type="function">
    <text evidence="1">Acts as a processive, ATP-dependent zinc metallopeptidase for both cytoplasmic and membrane proteins. Plays a role in the quality control of integral membrane proteins.</text>
</comment>
<comment type="cofactor">
    <cofactor evidence="1">
        <name>Zn(2+)</name>
        <dbReference type="ChEBI" id="CHEBI:29105"/>
    </cofactor>
    <text evidence="1">Binds 1 zinc ion per subunit.</text>
</comment>
<comment type="subunit">
    <text evidence="1">Homohexamer.</text>
</comment>
<comment type="subcellular location">
    <subcellularLocation>
        <location evidence="1">Cell inner membrane</location>
        <topology evidence="1">Multi-pass membrane protein</topology>
        <orientation evidence="1">Cytoplasmic side</orientation>
    </subcellularLocation>
</comment>
<comment type="similarity">
    <text evidence="1">In the central section; belongs to the AAA ATPase family.</text>
</comment>
<comment type="similarity">
    <text evidence="1">In the C-terminal section; belongs to the peptidase M41 family.</text>
</comment>
<dbReference type="EC" id="3.4.24.-" evidence="1"/>
<dbReference type="EMBL" id="CP000471">
    <property type="protein sequence ID" value="ABK42963.1"/>
    <property type="molecule type" value="Genomic_DNA"/>
</dbReference>
<dbReference type="RefSeq" id="WP_011712133.1">
    <property type="nucleotide sequence ID" value="NC_008576.1"/>
</dbReference>
<dbReference type="SMR" id="A0L4S0"/>
<dbReference type="STRING" id="156889.Mmc1_0438"/>
<dbReference type="MEROPS" id="M41.001"/>
<dbReference type="KEGG" id="mgm:Mmc1_0438"/>
<dbReference type="eggNOG" id="COG0465">
    <property type="taxonomic scope" value="Bacteria"/>
</dbReference>
<dbReference type="HOGENOM" id="CLU_000688_16_2_5"/>
<dbReference type="OrthoDB" id="9809379at2"/>
<dbReference type="Proteomes" id="UP000002586">
    <property type="component" value="Chromosome"/>
</dbReference>
<dbReference type="GO" id="GO:0005886">
    <property type="term" value="C:plasma membrane"/>
    <property type="evidence" value="ECO:0007669"/>
    <property type="project" value="UniProtKB-SubCell"/>
</dbReference>
<dbReference type="GO" id="GO:0005524">
    <property type="term" value="F:ATP binding"/>
    <property type="evidence" value="ECO:0007669"/>
    <property type="project" value="UniProtKB-UniRule"/>
</dbReference>
<dbReference type="GO" id="GO:0016887">
    <property type="term" value="F:ATP hydrolysis activity"/>
    <property type="evidence" value="ECO:0007669"/>
    <property type="project" value="UniProtKB-UniRule"/>
</dbReference>
<dbReference type="GO" id="GO:0004176">
    <property type="term" value="F:ATP-dependent peptidase activity"/>
    <property type="evidence" value="ECO:0007669"/>
    <property type="project" value="InterPro"/>
</dbReference>
<dbReference type="GO" id="GO:0004222">
    <property type="term" value="F:metalloendopeptidase activity"/>
    <property type="evidence" value="ECO:0007669"/>
    <property type="project" value="InterPro"/>
</dbReference>
<dbReference type="GO" id="GO:0008270">
    <property type="term" value="F:zinc ion binding"/>
    <property type="evidence" value="ECO:0007669"/>
    <property type="project" value="UniProtKB-UniRule"/>
</dbReference>
<dbReference type="GO" id="GO:0030163">
    <property type="term" value="P:protein catabolic process"/>
    <property type="evidence" value="ECO:0007669"/>
    <property type="project" value="UniProtKB-UniRule"/>
</dbReference>
<dbReference type="GO" id="GO:0006508">
    <property type="term" value="P:proteolysis"/>
    <property type="evidence" value="ECO:0007669"/>
    <property type="project" value="UniProtKB-KW"/>
</dbReference>
<dbReference type="CDD" id="cd19501">
    <property type="entry name" value="RecA-like_FtsH"/>
    <property type="match status" value="1"/>
</dbReference>
<dbReference type="FunFam" id="1.10.8.60:FF:000001">
    <property type="entry name" value="ATP-dependent zinc metalloprotease FtsH"/>
    <property type="match status" value="1"/>
</dbReference>
<dbReference type="FunFam" id="1.20.58.760:FF:000001">
    <property type="entry name" value="ATP-dependent zinc metalloprotease FtsH"/>
    <property type="match status" value="1"/>
</dbReference>
<dbReference type="FunFam" id="3.40.50.300:FF:000001">
    <property type="entry name" value="ATP-dependent zinc metalloprotease FtsH"/>
    <property type="match status" value="1"/>
</dbReference>
<dbReference type="Gene3D" id="1.10.8.60">
    <property type="match status" value="1"/>
</dbReference>
<dbReference type="Gene3D" id="3.30.720.210">
    <property type="match status" value="1"/>
</dbReference>
<dbReference type="Gene3D" id="3.40.50.300">
    <property type="entry name" value="P-loop containing nucleotide triphosphate hydrolases"/>
    <property type="match status" value="1"/>
</dbReference>
<dbReference type="Gene3D" id="1.20.58.760">
    <property type="entry name" value="Peptidase M41"/>
    <property type="match status" value="1"/>
</dbReference>
<dbReference type="HAMAP" id="MF_01458">
    <property type="entry name" value="FtsH"/>
    <property type="match status" value="1"/>
</dbReference>
<dbReference type="InterPro" id="IPR003593">
    <property type="entry name" value="AAA+_ATPase"/>
</dbReference>
<dbReference type="InterPro" id="IPR041569">
    <property type="entry name" value="AAA_lid_3"/>
</dbReference>
<dbReference type="InterPro" id="IPR003959">
    <property type="entry name" value="ATPase_AAA_core"/>
</dbReference>
<dbReference type="InterPro" id="IPR003960">
    <property type="entry name" value="ATPase_AAA_CS"/>
</dbReference>
<dbReference type="InterPro" id="IPR005936">
    <property type="entry name" value="FtsH"/>
</dbReference>
<dbReference type="InterPro" id="IPR027417">
    <property type="entry name" value="P-loop_NTPase"/>
</dbReference>
<dbReference type="InterPro" id="IPR011546">
    <property type="entry name" value="Pept_M41_FtsH_extracell"/>
</dbReference>
<dbReference type="InterPro" id="IPR000642">
    <property type="entry name" value="Peptidase_M41"/>
</dbReference>
<dbReference type="InterPro" id="IPR037219">
    <property type="entry name" value="Peptidase_M41-like"/>
</dbReference>
<dbReference type="NCBIfam" id="TIGR01241">
    <property type="entry name" value="FtsH_fam"/>
    <property type="match status" value="1"/>
</dbReference>
<dbReference type="PANTHER" id="PTHR23076:SF97">
    <property type="entry name" value="ATP-DEPENDENT ZINC METALLOPROTEASE YME1L1"/>
    <property type="match status" value="1"/>
</dbReference>
<dbReference type="PANTHER" id="PTHR23076">
    <property type="entry name" value="METALLOPROTEASE M41 FTSH"/>
    <property type="match status" value="1"/>
</dbReference>
<dbReference type="Pfam" id="PF00004">
    <property type="entry name" value="AAA"/>
    <property type="match status" value="1"/>
</dbReference>
<dbReference type="Pfam" id="PF17862">
    <property type="entry name" value="AAA_lid_3"/>
    <property type="match status" value="1"/>
</dbReference>
<dbReference type="Pfam" id="PF06480">
    <property type="entry name" value="FtsH_ext"/>
    <property type="match status" value="1"/>
</dbReference>
<dbReference type="Pfam" id="PF01434">
    <property type="entry name" value="Peptidase_M41"/>
    <property type="match status" value="1"/>
</dbReference>
<dbReference type="SMART" id="SM00382">
    <property type="entry name" value="AAA"/>
    <property type="match status" value="1"/>
</dbReference>
<dbReference type="SUPFAM" id="SSF140990">
    <property type="entry name" value="FtsH protease domain-like"/>
    <property type="match status" value="1"/>
</dbReference>
<dbReference type="SUPFAM" id="SSF52540">
    <property type="entry name" value="P-loop containing nucleoside triphosphate hydrolases"/>
    <property type="match status" value="1"/>
</dbReference>
<dbReference type="PROSITE" id="PS00674">
    <property type="entry name" value="AAA"/>
    <property type="match status" value="1"/>
</dbReference>
<accession>A0L4S0</accession>
<organism>
    <name type="scientific">Magnetococcus marinus (strain ATCC BAA-1437 / JCM 17883 / MC-1)</name>
    <dbReference type="NCBI Taxonomy" id="156889"/>
    <lineage>
        <taxon>Bacteria</taxon>
        <taxon>Pseudomonadati</taxon>
        <taxon>Pseudomonadota</taxon>
        <taxon>Alphaproteobacteria</taxon>
        <taxon>Magnetococcales</taxon>
        <taxon>Magnetococcaceae</taxon>
        <taxon>Magnetococcus</taxon>
    </lineage>
</organism>
<sequence length="673" mass="73528">MNGFFKNLSLWLVIGLLMVMLFNLFNSPQGPGQSITFSDFSEMVAQGKVTAVTLEGRTVRGLSTDGSPFSSRVPDNYDLTKDLLAHGVDIDVREPEGTPMLMQILISWFPMLLLIAVWIYFMRQMQSGGGRGAMSFGKSKAKLMSDKAAKVTFQDVAGIEEAKEELQEVVQFLKDPHKFQRLGGKIPKGVLLVGPPGTGKTLLARAIAGEANVPFFNLSGSDFVEMFVGVGAARVRDMFEQGKKNAPCIIFIDEIDAVGRHRGAGLGGGHDEREQTLNQLLVEMDGFESTEGVIMVAATNRPDVLDPALLRPGRFDRQVTVPNPDILGRTQILKVHMNKVPLSDSVDAEVIARATPGFSGADLANLVNEAALIAAQLDKRVVEMEDFENAKDKVMMGKPRRSAVISEKERKTTAYHEAGHAVVAMALDGADPVHKVTIIPRGRALGLTMQLPLEDRYTYSKVQLEQNIAILMGGRLAEELVLNQLTTGAGNDIQRATDLARKMICSYGMSDTLGPLTYGENEQEIFLGREITQHKSVSEETARRIDAEVFDIVDRNYKRAKQILTDKMEVLHTMAQALLERETIDADEVIKLMAGEPAETALKPLKKKDERANKPTPTVADDGEQGDQTAKDAVAGSVTQAEDDVEGSTRTATEASTQEVVSKDTPEGDDKDR</sequence>
<name>FTSH_MAGMM</name>
<feature type="chain" id="PRO_5000165573" description="ATP-dependent zinc metalloprotease FtsH">
    <location>
        <begin position="1"/>
        <end position="673"/>
    </location>
</feature>
<feature type="topological domain" description="Cytoplasmic" evidence="1">
    <location>
        <begin position="1"/>
        <end position="7"/>
    </location>
</feature>
<feature type="transmembrane region" description="Helical" evidence="1">
    <location>
        <begin position="8"/>
        <end position="28"/>
    </location>
</feature>
<feature type="topological domain" description="Periplasmic" evidence="1">
    <location>
        <begin position="29"/>
        <end position="100"/>
    </location>
</feature>
<feature type="transmembrane region" description="Helical" evidence="1">
    <location>
        <begin position="101"/>
        <end position="121"/>
    </location>
</feature>
<feature type="topological domain" description="Cytoplasmic" evidence="1">
    <location>
        <begin position="122"/>
        <end position="673"/>
    </location>
</feature>
<feature type="region of interest" description="Disordered" evidence="2">
    <location>
        <begin position="601"/>
        <end position="673"/>
    </location>
</feature>
<feature type="compositionally biased region" description="Polar residues" evidence="2">
    <location>
        <begin position="648"/>
        <end position="660"/>
    </location>
</feature>
<feature type="compositionally biased region" description="Basic and acidic residues" evidence="2">
    <location>
        <begin position="661"/>
        <end position="673"/>
    </location>
</feature>
<feature type="active site" evidence="1">
    <location>
        <position position="417"/>
    </location>
</feature>
<feature type="binding site" evidence="1">
    <location>
        <begin position="194"/>
        <end position="201"/>
    </location>
    <ligand>
        <name>ATP</name>
        <dbReference type="ChEBI" id="CHEBI:30616"/>
    </ligand>
</feature>
<feature type="binding site" evidence="1">
    <location>
        <position position="416"/>
    </location>
    <ligand>
        <name>Zn(2+)</name>
        <dbReference type="ChEBI" id="CHEBI:29105"/>
        <note>catalytic</note>
    </ligand>
</feature>
<feature type="binding site" evidence="1">
    <location>
        <position position="420"/>
    </location>
    <ligand>
        <name>Zn(2+)</name>
        <dbReference type="ChEBI" id="CHEBI:29105"/>
        <note>catalytic</note>
    </ligand>
</feature>
<feature type="binding site" evidence="1">
    <location>
        <position position="492"/>
    </location>
    <ligand>
        <name>Zn(2+)</name>
        <dbReference type="ChEBI" id="CHEBI:29105"/>
        <note>catalytic</note>
    </ligand>
</feature>
<protein>
    <recommendedName>
        <fullName evidence="1">ATP-dependent zinc metalloprotease FtsH</fullName>
        <ecNumber evidence="1">3.4.24.-</ecNumber>
    </recommendedName>
</protein>